<protein>
    <recommendedName>
        <fullName evidence="2">Branched-chain alpha-ketoacid dehydrogenase kinase</fullName>
        <shortName evidence="2">BCKDH kinase</shortName>
        <shortName>BCKDHKIN</shortName>
        <shortName evidence="2">BDK</shortName>
        <ecNumber evidence="2">2.7.11.1</ecNumber>
    </recommendedName>
    <alternativeName>
        <fullName>[3-methyl-2-oxobutanoate dehydrogenase [lipoamide]] kinase, mitochondrial</fullName>
        <ecNumber evidence="2">2.7.11.4</ecNumber>
    </alternativeName>
</protein>
<organism>
    <name type="scientific">Bos taurus</name>
    <name type="common">Bovine</name>
    <dbReference type="NCBI Taxonomy" id="9913"/>
    <lineage>
        <taxon>Eukaryota</taxon>
        <taxon>Metazoa</taxon>
        <taxon>Chordata</taxon>
        <taxon>Craniata</taxon>
        <taxon>Vertebrata</taxon>
        <taxon>Euteleostomi</taxon>
        <taxon>Mammalia</taxon>
        <taxon>Eutheria</taxon>
        <taxon>Laurasiatheria</taxon>
        <taxon>Artiodactyla</taxon>
        <taxon>Ruminantia</taxon>
        <taxon>Pecora</taxon>
        <taxon>Bovidae</taxon>
        <taxon>Bovinae</taxon>
        <taxon>Bos</taxon>
    </lineage>
</organism>
<reference key="1">
    <citation type="submission" date="2005-09" db="EMBL/GenBank/DDBJ databases">
        <authorList>
            <consortium name="NIH - Mammalian Gene Collection (MGC) project"/>
        </authorList>
    </citation>
    <scope>NUCLEOTIDE SEQUENCE [LARGE SCALE MRNA]</scope>
    <source>
        <strain>Crossbred X Angus</strain>
        <tissue>Ileum</tissue>
    </source>
</reference>
<feature type="transit peptide" description="Mitochondrion" evidence="1">
    <location>
        <begin position="1"/>
        <end position="30"/>
    </location>
</feature>
<feature type="chain" id="PRO_0000245575" description="Branched-chain alpha-ketoacid dehydrogenase kinase">
    <location>
        <begin position="31"/>
        <end position="412"/>
    </location>
</feature>
<feature type="domain" description="Histidine kinase" evidence="5">
    <location>
        <begin position="159"/>
        <end position="404"/>
    </location>
</feature>
<feature type="binding site" evidence="2">
    <location>
        <position position="279"/>
    </location>
    <ligand>
        <name>ATP</name>
        <dbReference type="ChEBI" id="CHEBI:30616"/>
    </ligand>
</feature>
<feature type="binding site" evidence="2">
    <location>
        <position position="279"/>
    </location>
    <ligand>
        <name>Mg(2+)</name>
        <dbReference type="ChEBI" id="CHEBI:18420"/>
        <note>structural</note>
    </ligand>
</feature>
<feature type="binding site" evidence="2">
    <location>
        <position position="315"/>
    </location>
    <ligand>
        <name>ATP</name>
        <dbReference type="ChEBI" id="CHEBI:30616"/>
    </ligand>
</feature>
<feature type="binding site" evidence="2">
    <location>
        <position position="328"/>
    </location>
    <ligand>
        <name>K(+)</name>
        <dbReference type="ChEBI" id="CHEBI:29103"/>
        <note>structural</note>
    </ligand>
</feature>
<feature type="binding site" evidence="2">
    <location>
        <position position="330"/>
    </location>
    <ligand>
        <name>K(+)</name>
        <dbReference type="ChEBI" id="CHEBI:29103"/>
        <note>structural</note>
    </ligand>
</feature>
<feature type="binding site" evidence="2">
    <location>
        <position position="333"/>
    </location>
    <ligand>
        <name>K(+)</name>
        <dbReference type="ChEBI" id="CHEBI:29103"/>
        <note>structural</note>
    </ligand>
</feature>
<feature type="binding site" evidence="2">
    <location>
        <position position="334"/>
    </location>
    <ligand>
        <name>ATP</name>
        <dbReference type="ChEBI" id="CHEBI:30616"/>
    </ligand>
</feature>
<feature type="binding site" evidence="2">
    <location>
        <position position="335"/>
    </location>
    <ligand>
        <name>ATP</name>
        <dbReference type="ChEBI" id="CHEBI:30616"/>
    </ligand>
</feature>
<feature type="binding site" evidence="2">
    <location>
        <position position="364"/>
    </location>
    <ligand>
        <name>ATP</name>
        <dbReference type="ChEBI" id="CHEBI:30616"/>
    </ligand>
</feature>
<feature type="binding site" evidence="2">
    <location>
        <position position="367"/>
    </location>
    <ligand>
        <name>ATP</name>
        <dbReference type="ChEBI" id="CHEBI:30616"/>
    </ligand>
</feature>
<feature type="binding site" evidence="2">
    <location>
        <position position="367"/>
    </location>
    <ligand>
        <name>K(+)</name>
        <dbReference type="ChEBI" id="CHEBI:29103"/>
        <note>structural</note>
    </ligand>
</feature>
<feature type="binding site" evidence="2">
    <location>
        <position position="370"/>
    </location>
    <ligand>
        <name>ATP</name>
        <dbReference type="ChEBI" id="CHEBI:30616"/>
    </ligand>
</feature>
<feature type="modified residue" description="Phosphoserine" evidence="4">
    <location>
        <position position="31"/>
    </location>
</feature>
<feature type="modified residue" description="Phosphoserine; by autocatalysis" evidence="1">
    <location>
        <position position="52"/>
    </location>
</feature>
<feature type="modified residue" description="N6-acetyllysine" evidence="2">
    <location>
        <position position="192"/>
    </location>
</feature>
<feature type="modified residue" description="N6-acetyllysine" evidence="2">
    <location>
        <position position="233"/>
    </location>
</feature>
<feature type="modified residue" description="Phosphoserine" evidence="3">
    <location>
        <position position="356"/>
    </location>
</feature>
<feature type="modified residue" description="Phosphoserine" evidence="4">
    <location>
        <position position="360"/>
    </location>
</feature>
<keyword id="KW-0007">Acetylation</keyword>
<keyword id="KW-0067">ATP-binding</keyword>
<keyword id="KW-0418">Kinase</keyword>
<keyword id="KW-0460">Magnesium</keyword>
<keyword id="KW-0479">Metal-binding</keyword>
<keyword id="KW-0496">Mitochondrion</keyword>
<keyword id="KW-0547">Nucleotide-binding</keyword>
<keyword id="KW-0597">Phosphoprotein</keyword>
<keyword id="KW-0630">Potassium</keyword>
<keyword id="KW-1185">Reference proteome</keyword>
<keyword id="KW-0808">Transferase</keyword>
<keyword id="KW-0809">Transit peptide</keyword>
<evidence type="ECO:0000250" key="1"/>
<evidence type="ECO:0000250" key="2">
    <source>
        <dbReference type="UniProtKB" id="O14874"/>
    </source>
</evidence>
<evidence type="ECO:0000250" key="3">
    <source>
        <dbReference type="UniProtKB" id="O55028"/>
    </source>
</evidence>
<evidence type="ECO:0000250" key="4">
    <source>
        <dbReference type="UniProtKB" id="Q00972"/>
    </source>
</evidence>
<evidence type="ECO:0000255" key="5">
    <source>
        <dbReference type="PROSITE-ProRule" id="PRU00107"/>
    </source>
</evidence>
<evidence type="ECO:0000305" key="6"/>
<name>BCKD_BOVIN</name>
<proteinExistence type="evidence at transcript level"/>
<dbReference type="EC" id="2.7.11.1" evidence="2"/>
<dbReference type="EC" id="2.7.11.4" evidence="2"/>
<dbReference type="EMBL" id="BC105352">
    <property type="protein sequence ID" value="AAI05353.1"/>
    <property type="molecule type" value="mRNA"/>
</dbReference>
<dbReference type="RefSeq" id="NP_001039371.1">
    <property type="nucleotide sequence ID" value="NM_001045906.2"/>
</dbReference>
<dbReference type="RefSeq" id="XP_024840459.1">
    <property type="nucleotide sequence ID" value="XM_024984691.2"/>
</dbReference>
<dbReference type="SMR" id="Q2KJG8"/>
<dbReference type="FunCoup" id="Q2KJG8">
    <property type="interactions" value="684"/>
</dbReference>
<dbReference type="STRING" id="9913.ENSBTAP00000067306"/>
<dbReference type="PaxDb" id="9913-ENSBTAP00000013909"/>
<dbReference type="Ensembl" id="ENSBTAT00000013909.5">
    <property type="protein sequence ID" value="ENSBTAP00000013909.3"/>
    <property type="gene ID" value="ENSBTAG00000010524.5"/>
</dbReference>
<dbReference type="GeneID" id="505005"/>
<dbReference type="KEGG" id="bta:505005"/>
<dbReference type="CTD" id="10295"/>
<dbReference type="VEuPathDB" id="HostDB:ENSBTAG00000010524"/>
<dbReference type="VGNC" id="VGNC:26444">
    <property type="gene designation" value="BCKDK"/>
</dbReference>
<dbReference type="eggNOG" id="KOG0787">
    <property type="taxonomic scope" value="Eukaryota"/>
</dbReference>
<dbReference type="GeneTree" id="ENSGT01030000234646"/>
<dbReference type="HOGENOM" id="CLU_023861_4_0_1"/>
<dbReference type="InParanoid" id="Q2KJG8"/>
<dbReference type="OMA" id="WSYPPSA"/>
<dbReference type="OrthoDB" id="3264224at2759"/>
<dbReference type="TreeFam" id="TF331303"/>
<dbReference type="Reactome" id="R-BTA-70895">
    <property type="pathway name" value="Branched-chain amino acid catabolism"/>
</dbReference>
<dbReference type="Proteomes" id="UP000009136">
    <property type="component" value="Chromosome 25"/>
</dbReference>
<dbReference type="Bgee" id="ENSBTAG00000010524">
    <property type="expression patterns" value="Expressed in laryngeal cartilage and 106 other cell types or tissues"/>
</dbReference>
<dbReference type="GO" id="GO:0005759">
    <property type="term" value="C:mitochondrial matrix"/>
    <property type="evidence" value="ECO:0007669"/>
    <property type="project" value="UniProtKB-SubCell"/>
</dbReference>
<dbReference type="GO" id="GO:0005739">
    <property type="term" value="C:mitochondrion"/>
    <property type="evidence" value="ECO:0000318"/>
    <property type="project" value="GO_Central"/>
</dbReference>
<dbReference type="GO" id="GO:0045252">
    <property type="term" value="C:oxoglutarate dehydrogenase complex"/>
    <property type="evidence" value="ECO:0000250"/>
    <property type="project" value="HGNC-UCL"/>
</dbReference>
<dbReference type="GO" id="GO:0047323">
    <property type="term" value="F:[3-methyl-2-oxobutanoate dehydrogenase (acetyl-transferring)] kinase activity"/>
    <property type="evidence" value="ECO:0007669"/>
    <property type="project" value="UniProtKB-EC"/>
</dbReference>
<dbReference type="GO" id="GO:0005524">
    <property type="term" value="F:ATP binding"/>
    <property type="evidence" value="ECO:0000250"/>
    <property type="project" value="HGNC-UCL"/>
</dbReference>
<dbReference type="GO" id="GO:0046872">
    <property type="term" value="F:metal ion binding"/>
    <property type="evidence" value="ECO:0007669"/>
    <property type="project" value="UniProtKB-KW"/>
</dbReference>
<dbReference type="GO" id="GO:0106310">
    <property type="term" value="F:protein serine kinase activity"/>
    <property type="evidence" value="ECO:0007669"/>
    <property type="project" value="RHEA"/>
</dbReference>
<dbReference type="GO" id="GO:0004674">
    <property type="term" value="F:protein serine/threonine kinase activity"/>
    <property type="evidence" value="ECO:0000250"/>
    <property type="project" value="HGNC-UCL"/>
</dbReference>
<dbReference type="GO" id="GO:0004722">
    <property type="term" value="F:protein serine/threonine phosphatase activity"/>
    <property type="evidence" value="ECO:0007669"/>
    <property type="project" value="Ensembl"/>
</dbReference>
<dbReference type="GO" id="GO:0004740">
    <property type="term" value="F:pyruvate dehydrogenase (acetyl-transferring) kinase activity"/>
    <property type="evidence" value="ECO:0000318"/>
    <property type="project" value="GO_Central"/>
</dbReference>
<dbReference type="GO" id="GO:0009083">
    <property type="term" value="P:branched-chain amino acid catabolic process"/>
    <property type="evidence" value="ECO:0000250"/>
    <property type="project" value="HGNC-UCL"/>
</dbReference>
<dbReference type="GO" id="GO:0008610">
    <property type="term" value="P:lipid biosynthetic process"/>
    <property type="evidence" value="ECO:0007669"/>
    <property type="project" value="Ensembl"/>
</dbReference>
<dbReference type="GO" id="GO:0010510">
    <property type="term" value="P:regulation of acetyl-CoA biosynthetic process from pyruvate"/>
    <property type="evidence" value="ECO:0000318"/>
    <property type="project" value="GO_Central"/>
</dbReference>
<dbReference type="GO" id="GO:0010906">
    <property type="term" value="P:regulation of glucose metabolic process"/>
    <property type="evidence" value="ECO:0000318"/>
    <property type="project" value="GO_Central"/>
</dbReference>
<dbReference type="CDD" id="cd16929">
    <property type="entry name" value="HATPase_PDK-like"/>
    <property type="match status" value="1"/>
</dbReference>
<dbReference type="FunFam" id="1.20.140.20:FF:000002">
    <property type="entry name" value="[3-methyl-2-oxobutanoate dehydrogenase [lipoamide]] kinase, mitochondrial"/>
    <property type="match status" value="1"/>
</dbReference>
<dbReference type="FunFam" id="3.30.565.10:FF:000051">
    <property type="entry name" value="[3-methyl-2-oxobutanoate dehydrogenase [lipoamide]] kinase, mitochondrial"/>
    <property type="match status" value="1"/>
</dbReference>
<dbReference type="Gene3D" id="1.20.140.20">
    <property type="entry name" value="Alpha-ketoacid/pyruvate dehydrogenase kinase, N-terminal domain"/>
    <property type="match status" value="1"/>
</dbReference>
<dbReference type="Gene3D" id="3.30.565.10">
    <property type="entry name" value="Histidine kinase-like ATPase, C-terminal domain"/>
    <property type="match status" value="1"/>
</dbReference>
<dbReference type="InterPro" id="IPR036784">
    <property type="entry name" value="AK/P_DHK_N_sf"/>
</dbReference>
<dbReference type="InterPro" id="IPR018955">
    <property type="entry name" value="BCDHK/PDK_N"/>
</dbReference>
<dbReference type="InterPro" id="IPR039028">
    <property type="entry name" value="BCKD/PDK"/>
</dbReference>
<dbReference type="InterPro" id="IPR036890">
    <property type="entry name" value="HATPase_C_sf"/>
</dbReference>
<dbReference type="InterPro" id="IPR005467">
    <property type="entry name" value="His_kinase_dom"/>
</dbReference>
<dbReference type="InterPro" id="IPR004358">
    <property type="entry name" value="Sig_transdc_His_kin-like_C"/>
</dbReference>
<dbReference type="PANTHER" id="PTHR11947:SF20">
    <property type="entry name" value="[3-METHYL-2-OXOBUTANOATE DEHYDROGENASE [LIPOAMIDE]] KINASE, MITOCHONDRIAL"/>
    <property type="match status" value="1"/>
</dbReference>
<dbReference type="PANTHER" id="PTHR11947">
    <property type="entry name" value="PYRUVATE DEHYDROGENASE KINASE"/>
    <property type="match status" value="1"/>
</dbReference>
<dbReference type="Pfam" id="PF10436">
    <property type="entry name" value="BCDHK_Adom3"/>
    <property type="match status" value="1"/>
</dbReference>
<dbReference type="Pfam" id="PF02518">
    <property type="entry name" value="HATPase_c"/>
    <property type="match status" value="1"/>
</dbReference>
<dbReference type="PRINTS" id="PR00344">
    <property type="entry name" value="BCTRLSENSOR"/>
</dbReference>
<dbReference type="SMART" id="SM00387">
    <property type="entry name" value="HATPase_c"/>
    <property type="match status" value="1"/>
</dbReference>
<dbReference type="SUPFAM" id="SSF69012">
    <property type="entry name" value="alpha-ketoacid dehydrogenase kinase, N-terminal domain"/>
    <property type="match status" value="1"/>
</dbReference>
<dbReference type="SUPFAM" id="SSF55874">
    <property type="entry name" value="ATPase domain of HSP90 chaperone/DNA topoisomerase II/histidine kinase"/>
    <property type="match status" value="1"/>
</dbReference>
<dbReference type="PROSITE" id="PS50109">
    <property type="entry name" value="HIS_KIN"/>
    <property type="match status" value="1"/>
</dbReference>
<comment type="function">
    <text evidence="2">Serine/threonine-protein kinase component of macronutrients metabolism. Forms a functional kinase and phosphatase pair with PPM1K, serving as a metabolic regulatory node that coordinates branched-chain amino acids (BCAAs) with glucose and lipid metabolism via two distinct phosphoprotein targets: mitochondrial BCKDHA subunit of the branched-chain alpha-ketoacid dehydrogenase (BCKDH) complex and cytosolic ACLY, a lipogenic enzyme of Krebs cycle (By similarity). Phosphorylates and inactivates mitochondrial BCKDH complex a multisubunit complex consisting of three multimeric components each involved in different steps of BCAA catabolism: E1 composed of BCKDHA and BCKDHB, E2 core composed of DBT monomers, and E3 composed of DLD monomers. Associates with the E2 component of BCKDH complex and phosphorylates BCKDHA on Ser-347, leading to conformational changes that interrupt substrate channeling between E1 and E2 and inactivates the BCKDH complex (By similarity). Phosphorylates ACLY on Ser-455 in response to changes in cellular carbohydrate abundance such as occurs during fasting to feeding metabolic transition. Refeeding stimulates MLXIPL/ChREBP transcription factor, leading to increased BCKDK to PPM1K expression ratio, phosphorylation and activation of ACLY that ultimately results in the generation of malonyl-CoA and oxaloacetate immediate substrates of de novo lipogenesis and glucogenesis, respectively (By similarity). Recognizes phosphosites having SxxE/D canonical motif (By similarity).</text>
</comment>
<comment type="catalytic activity">
    <reaction evidence="2">
        <text>L-seryl-[3-methyl-2-oxobutanoate dehydrogenase] + ATP = O-phospho-L-seryl-[3-methyl-2-oxobutanoate dehydrogenase] + ADP + H(+)</text>
        <dbReference type="Rhea" id="RHEA:17301"/>
        <dbReference type="Rhea" id="RHEA-COMP:13695"/>
        <dbReference type="Rhea" id="RHEA-COMP:13696"/>
        <dbReference type="ChEBI" id="CHEBI:15378"/>
        <dbReference type="ChEBI" id="CHEBI:29999"/>
        <dbReference type="ChEBI" id="CHEBI:30616"/>
        <dbReference type="ChEBI" id="CHEBI:83421"/>
        <dbReference type="ChEBI" id="CHEBI:456216"/>
        <dbReference type="EC" id="2.7.11.4"/>
    </reaction>
    <physiologicalReaction direction="left-to-right" evidence="2">
        <dbReference type="Rhea" id="RHEA:17302"/>
    </physiologicalReaction>
</comment>
<comment type="catalytic activity">
    <reaction evidence="2">
        <text>L-seryl-[protein] + ATP = O-phospho-L-seryl-[protein] + ADP + H(+)</text>
        <dbReference type="Rhea" id="RHEA:17989"/>
        <dbReference type="Rhea" id="RHEA-COMP:9863"/>
        <dbReference type="Rhea" id="RHEA-COMP:11604"/>
        <dbReference type="ChEBI" id="CHEBI:15378"/>
        <dbReference type="ChEBI" id="CHEBI:29999"/>
        <dbReference type="ChEBI" id="CHEBI:30616"/>
        <dbReference type="ChEBI" id="CHEBI:83421"/>
        <dbReference type="ChEBI" id="CHEBI:456216"/>
        <dbReference type="EC" id="2.7.11.1"/>
    </reaction>
    <physiologicalReaction direction="left-to-right" evidence="2">
        <dbReference type="Rhea" id="RHEA:17990"/>
    </physiologicalReaction>
</comment>
<comment type="subunit">
    <text evidence="2 4">Homodimer. Homotetramer (By similarity). Dimerizes through interaction of two opposing nucleotide-binding domains. Interacts with E2 component of the branched-chain alpha-ketoacid dehydrogenase (BCKDH) complex. Competes with BCKDK for binding to the E2 component; this interaction is modulated by branched-chain alpha-keto acids. At steady state, BCKDH holoenzyme contains BCKDK and BCKDHA is phosphorylated. In response to high levels of branched-chain alpha-keto acids, the inhibitory BCKDK is replaced by activating PPM1K leading to BCKDHA dephosphorylation and BCAA degradation (By similarity).</text>
</comment>
<comment type="subcellular location">
    <subcellularLocation>
        <location evidence="1">Mitochondrion matrix</location>
    </subcellularLocation>
    <subcellularLocation>
        <location evidence="2">Mitochondrion</location>
    </subcellularLocation>
</comment>
<comment type="PTM">
    <text evidence="2">Autophosphorylated.</text>
</comment>
<comment type="similarity">
    <text evidence="6">Belongs to the PDK/BCKDK protein kinase family.</text>
</comment>
<gene>
    <name type="primary">BCKDK</name>
</gene>
<sequence length="412" mass="46438">MILASVLGSGPRGGPPLRPLLGPALSLRARSTSATDTHHVEMARERSKTVTSFYNQSAIDVAAEKPSVRLTPTMMLYSGRSQDGSHLLKSARYLQQELPVRIAHRIKGFRSLPFIIGCNPTILHVHELYIRAFQKLTDFPPIKDQADEARYCQLVRQLLDDHKDVVTLLAEGLRESRKYIEDEKLVRYFLDKTLTSRLGIRMLATHHLALHEDKPDFVGIICTRLSPKKIIEKWVDFARRLCEHKYGNAPRVRINGHVAARFPFIPMPLDYILPELLKNAMRATMESHLDTPYNVPDVVITIANNDIDLVIRISDRGGGIAHKDLDRVMDYHFTTAEASTQDPRISPLFGHLDLHSGGQSGPMHGFGFGLPTSRAYAEYLGGSLRLQSLQGIGTDVYLRLRHIDGREESFRI</sequence>
<accession>Q2KJG8</accession>